<protein>
    <recommendedName>
        <fullName evidence="1">Urease subunit gamma</fullName>
        <ecNumber evidence="1">3.5.1.5</ecNumber>
    </recommendedName>
    <alternativeName>
        <fullName evidence="1">Urea amidohydrolase subunit gamma</fullName>
    </alternativeName>
</protein>
<comment type="catalytic activity">
    <reaction evidence="1">
        <text>urea + 2 H2O + H(+) = hydrogencarbonate + 2 NH4(+)</text>
        <dbReference type="Rhea" id="RHEA:20557"/>
        <dbReference type="ChEBI" id="CHEBI:15377"/>
        <dbReference type="ChEBI" id="CHEBI:15378"/>
        <dbReference type="ChEBI" id="CHEBI:16199"/>
        <dbReference type="ChEBI" id="CHEBI:17544"/>
        <dbReference type="ChEBI" id="CHEBI:28938"/>
        <dbReference type="EC" id="3.5.1.5"/>
    </reaction>
</comment>
<comment type="pathway">
    <text evidence="1">Nitrogen metabolism; urea degradation; CO(2) and NH(3) from urea (urease route): step 1/1.</text>
</comment>
<comment type="subunit">
    <text evidence="1">Heterotrimer of UreA (gamma), UreB (beta) and UreC (alpha) subunits. Three heterotrimers associate to form the active enzyme.</text>
</comment>
<comment type="subcellular location">
    <subcellularLocation>
        <location evidence="1">Cytoplasm</location>
    </subcellularLocation>
</comment>
<comment type="similarity">
    <text evidence="1">Belongs to the urease gamma subunit family.</text>
</comment>
<keyword id="KW-0963">Cytoplasm</keyword>
<keyword id="KW-0378">Hydrolase</keyword>
<keyword id="KW-1185">Reference proteome</keyword>
<name>URE3_NOSP7</name>
<gene>
    <name evidence="1" type="primary">ureA</name>
    <name type="ordered locus">Npun_F0823</name>
</gene>
<proteinExistence type="inferred from homology"/>
<feature type="chain" id="PRO_1000199873" description="Urease subunit gamma">
    <location>
        <begin position="1"/>
        <end position="100"/>
    </location>
</feature>
<dbReference type="EC" id="3.5.1.5" evidence="1"/>
<dbReference type="EMBL" id="CP001037">
    <property type="protein sequence ID" value="ACC79562.1"/>
    <property type="molecule type" value="Genomic_DNA"/>
</dbReference>
<dbReference type="RefSeq" id="WP_012407584.1">
    <property type="nucleotide sequence ID" value="NC_010628.1"/>
</dbReference>
<dbReference type="SMR" id="B2IT64"/>
<dbReference type="STRING" id="63737.Npun_F0823"/>
<dbReference type="EnsemblBacteria" id="ACC79562">
    <property type="protein sequence ID" value="ACC79562"/>
    <property type="gene ID" value="Npun_F0823"/>
</dbReference>
<dbReference type="KEGG" id="npu:Npun_F0823"/>
<dbReference type="eggNOG" id="COG0831">
    <property type="taxonomic scope" value="Bacteria"/>
</dbReference>
<dbReference type="HOGENOM" id="CLU_145825_1_0_3"/>
<dbReference type="OrthoDB" id="9793527at2"/>
<dbReference type="PhylomeDB" id="B2IT64"/>
<dbReference type="UniPathway" id="UPA00258">
    <property type="reaction ID" value="UER00370"/>
</dbReference>
<dbReference type="Proteomes" id="UP000001191">
    <property type="component" value="Chromosome"/>
</dbReference>
<dbReference type="GO" id="GO:0005737">
    <property type="term" value="C:cytoplasm"/>
    <property type="evidence" value="ECO:0007669"/>
    <property type="project" value="UniProtKB-SubCell"/>
</dbReference>
<dbReference type="GO" id="GO:0016151">
    <property type="term" value="F:nickel cation binding"/>
    <property type="evidence" value="ECO:0007669"/>
    <property type="project" value="InterPro"/>
</dbReference>
<dbReference type="GO" id="GO:0009039">
    <property type="term" value="F:urease activity"/>
    <property type="evidence" value="ECO:0007669"/>
    <property type="project" value="UniProtKB-UniRule"/>
</dbReference>
<dbReference type="GO" id="GO:0043419">
    <property type="term" value="P:urea catabolic process"/>
    <property type="evidence" value="ECO:0007669"/>
    <property type="project" value="UniProtKB-UniRule"/>
</dbReference>
<dbReference type="CDD" id="cd00390">
    <property type="entry name" value="Urease_gamma"/>
    <property type="match status" value="1"/>
</dbReference>
<dbReference type="Gene3D" id="3.30.280.10">
    <property type="entry name" value="Urease, gamma-like subunit"/>
    <property type="match status" value="1"/>
</dbReference>
<dbReference type="HAMAP" id="MF_00739">
    <property type="entry name" value="Urease_gamma"/>
    <property type="match status" value="1"/>
</dbReference>
<dbReference type="InterPro" id="IPR012010">
    <property type="entry name" value="Urease_gamma"/>
</dbReference>
<dbReference type="InterPro" id="IPR002026">
    <property type="entry name" value="Urease_gamma/gamma-beta_su"/>
</dbReference>
<dbReference type="InterPro" id="IPR036463">
    <property type="entry name" value="Urease_gamma_sf"/>
</dbReference>
<dbReference type="InterPro" id="IPR050069">
    <property type="entry name" value="Urease_subunit"/>
</dbReference>
<dbReference type="NCBIfam" id="NF009712">
    <property type="entry name" value="PRK13241.1"/>
    <property type="match status" value="1"/>
</dbReference>
<dbReference type="NCBIfam" id="TIGR00193">
    <property type="entry name" value="urease_gam"/>
    <property type="match status" value="1"/>
</dbReference>
<dbReference type="PANTHER" id="PTHR33569">
    <property type="entry name" value="UREASE"/>
    <property type="match status" value="1"/>
</dbReference>
<dbReference type="PANTHER" id="PTHR33569:SF1">
    <property type="entry name" value="UREASE"/>
    <property type="match status" value="1"/>
</dbReference>
<dbReference type="Pfam" id="PF00547">
    <property type="entry name" value="Urease_gamma"/>
    <property type="match status" value="1"/>
</dbReference>
<dbReference type="PIRSF" id="PIRSF001223">
    <property type="entry name" value="Urease_gamma"/>
    <property type="match status" value="1"/>
</dbReference>
<dbReference type="SUPFAM" id="SSF54111">
    <property type="entry name" value="Urease, gamma-subunit"/>
    <property type="match status" value="1"/>
</dbReference>
<evidence type="ECO:0000255" key="1">
    <source>
        <dbReference type="HAMAP-Rule" id="MF_00739"/>
    </source>
</evidence>
<accession>B2IT64</accession>
<reference key="1">
    <citation type="journal article" date="2013" name="Plant Physiol.">
        <title>A Nostoc punctiforme Sugar Transporter Necessary to Establish a Cyanobacterium-Plant Symbiosis.</title>
        <authorList>
            <person name="Ekman M."/>
            <person name="Picossi S."/>
            <person name="Campbell E.L."/>
            <person name="Meeks J.C."/>
            <person name="Flores E."/>
        </authorList>
    </citation>
    <scope>NUCLEOTIDE SEQUENCE [LARGE SCALE GENOMIC DNA]</scope>
    <source>
        <strain>ATCC 29133 / PCC 73102</strain>
    </source>
</reference>
<sequence length="100" mass="11054">MQLTPQEKDKLLIFTAALLAERRKGRGLKLNYPEAIAYISAAILEGARDGQTVAELMSYGTTLLTRDDVMEGIPEMVHDVQVEATFPDGTKLVTVHNPIR</sequence>
<organism>
    <name type="scientific">Nostoc punctiforme (strain ATCC 29133 / PCC 73102)</name>
    <dbReference type="NCBI Taxonomy" id="63737"/>
    <lineage>
        <taxon>Bacteria</taxon>
        <taxon>Bacillati</taxon>
        <taxon>Cyanobacteriota</taxon>
        <taxon>Cyanophyceae</taxon>
        <taxon>Nostocales</taxon>
        <taxon>Nostocaceae</taxon>
        <taxon>Nostoc</taxon>
    </lineage>
</organism>